<organism evidence="2">
    <name type="scientific">Heliothis virescens</name>
    <name type="common">Tobacco budworm moth</name>
    <dbReference type="NCBI Taxonomy" id="7102"/>
    <lineage>
        <taxon>Eukaryota</taxon>
        <taxon>Metazoa</taxon>
        <taxon>Ecdysozoa</taxon>
        <taxon>Arthropoda</taxon>
        <taxon>Hexapoda</taxon>
        <taxon>Insecta</taxon>
        <taxon>Pterygota</taxon>
        <taxon>Neoptera</taxon>
        <taxon>Endopterygota</taxon>
        <taxon>Lepidoptera</taxon>
        <taxon>Glossata</taxon>
        <taxon>Ditrysia</taxon>
        <taxon>Noctuoidea</taxon>
        <taxon>Noctuidae</taxon>
        <taxon>Heliothinae</taxon>
        <taxon>Heliothis</taxon>
    </lineage>
</organism>
<proteinExistence type="evidence at protein level"/>
<protein>
    <recommendedName>
        <fullName>Cecropin-C</fullName>
    </recommendedName>
</protein>
<name>CECC_HELVI</name>
<comment type="function">
    <text evidence="1">Cecropins have lytic and antibacterial activity against several Gram-positive and Gram-negative bacteria. Also has activity against fungi.</text>
</comment>
<comment type="subunit">
    <text evidence="1 2">Monomer.</text>
</comment>
<comment type="subcellular location">
    <subcellularLocation>
        <location evidence="1 2">Secreted</location>
    </subcellularLocation>
</comment>
<comment type="tissue specificity">
    <text evidence="1 2">Hemolymph.</text>
</comment>
<comment type="induction">
    <text evidence="1 2">By bacterial infection.</text>
</comment>
<comment type="mass spectrometry"/>
<comment type="similarity">
    <text evidence="2">Belongs to the cecropin family.</text>
</comment>
<dbReference type="SMR" id="P83415"/>
<dbReference type="GO" id="GO:0005576">
    <property type="term" value="C:extracellular region"/>
    <property type="evidence" value="ECO:0007669"/>
    <property type="project" value="UniProtKB-SubCell"/>
</dbReference>
<dbReference type="GO" id="GO:0019731">
    <property type="term" value="P:antibacterial humoral response"/>
    <property type="evidence" value="ECO:0007669"/>
    <property type="project" value="InterPro"/>
</dbReference>
<dbReference type="GO" id="GO:0050832">
    <property type="term" value="P:defense response to fungus"/>
    <property type="evidence" value="ECO:0007669"/>
    <property type="project" value="UniProtKB-KW"/>
</dbReference>
<dbReference type="GO" id="GO:0050830">
    <property type="term" value="P:defense response to Gram-positive bacterium"/>
    <property type="evidence" value="ECO:0007669"/>
    <property type="project" value="UniProtKB-ARBA"/>
</dbReference>
<dbReference type="GO" id="GO:0045087">
    <property type="term" value="P:innate immune response"/>
    <property type="evidence" value="ECO:0007669"/>
    <property type="project" value="UniProtKB-KW"/>
</dbReference>
<dbReference type="GO" id="GO:0031640">
    <property type="term" value="P:killing of cells of another organism"/>
    <property type="evidence" value="ECO:0007669"/>
    <property type="project" value="UniProtKB-KW"/>
</dbReference>
<dbReference type="InterPro" id="IPR000875">
    <property type="entry name" value="Cecropin"/>
</dbReference>
<dbReference type="Pfam" id="PF00272">
    <property type="entry name" value="Cecropin"/>
    <property type="match status" value="1"/>
</dbReference>
<dbReference type="PROSITE" id="PS00268">
    <property type="entry name" value="CECROPIN"/>
    <property type="match status" value="1"/>
</dbReference>
<evidence type="ECO:0000269" key="1">
    <source ref="1"/>
</evidence>
<evidence type="ECO:0000305" key="2"/>
<reference evidence="2" key="1">
    <citation type="submission" date="2002-07" db="UniProtKB">
        <authorList>
            <person name="Bulet P."/>
            <person name="Lamberty M."/>
            <person name="Brookhart G."/>
            <person name="Bushey D."/>
        </authorList>
    </citation>
    <scope>PROTEIN SEQUENCE</scope>
    <scope>FUNCTION</scope>
    <scope>SUBUNIT</scope>
    <scope>SUBCELLULAR LOCATION</scope>
    <scope>TISSUE SPECIFICITY</scope>
    <scope>INDUCTION</scope>
    <scope>MASS SPECTROMETRY</scope>
    <scope>HYDROXYLATION AT LYS-21</scope>
    <source>
        <tissue>Hemolymph</tissue>
    </source>
</reference>
<accession>P83415</accession>
<sequence>RWKVFKKIEKMGRNIRDGVIKAAPAIEVLGQAK</sequence>
<feature type="chain" id="PRO_0000127105" description="Cecropin-C">
    <location>
        <begin position="1"/>
        <end position="33" status="greater than"/>
    </location>
</feature>
<feature type="modified residue" description="5-hydroxylysine" evidence="1">
    <location>
        <position position="21"/>
    </location>
</feature>
<feature type="non-terminal residue" evidence="2">
    <location>
        <position position="33"/>
    </location>
</feature>
<keyword id="KW-0044">Antibiotic</keyword>
<keyword id="KW-0929">Antimicrobial</keyword>
<keyword id="KW-0903">Direct protein sequencing</keyword>
<keyword id="KW-0295">Fungicide</keyword>
<keyword id="KW-0379">Hydroxylation</keyword>
<keyword id="KW-0391">Immunity</keyword>
<keyword id="KW-0399">Innate immunity</keyword>
<keyword id="KW-0964">Secreted</keyword>